<sequence length="230" mass="23646">MLYAFKLGRKLRGEEPWCPEKGGKGGSSDKSAKYAAEAQKYAADLQNQQFNTIMNNLKPFTPLADKYVGSLENLSSLEGQGQALNQYYNSQQYKDLAGQARYQSLAAAEATGGLGSTATSNQLATIAPTLGQQWLSGQMNNYQNLANIGLGALQGQANAGQTYANNMSQISQQSAALAAANANRPSAMQSAIGGGASGAIAGAGLAKLIGSSTPWGAAIGGGLGLLGSLF</sequence>
<evidence type="ECO:0000250" key="1"/>
<evidence type="ECO:0000305" key="2"/>
<comment type="function">
    <text evidence="1">Component of the phage injection machinery. Required for injection of the phage DNA into the host (By similarity).</text>
</comment>
<comment type="similarity">
    <text evidence="2">Belongs to the podoviruses gp7 family.</text>
</comment>
<organism>
    <name type="scientific">Enterobacteria phage HK620</name>
    <name type="common">Bacteriophage HK620</name>
    <dbReference type="NCBI Taxonomy" id="155148"/>
    <lineage>
        <taxon>Viruses</taxon>
        <taxon>Duplodnaviria</taxon>
        <taxon>Heunggongvirae</taxon>
        <taxon>Uroviricota</taxon>
        <taxon>Caudoviricetes</taxon>
        <taxon>Lederbergvirus</taxon>
        <taxon>Lederbergvirus HK620</taxon>
    </lineage>
</organism>
<dbReference type="EMBL" id="AF335538">
    <property type="protein sequence ID" value="AAK28900.1"/>
    <property type="molecule type" value="Genomic_DNA"/>
</dbReference>
<dbReference type="RefSeq" id="NP_112085.1">
    <property type="nucleotide sequence ID" value="NC_002730.1"/>
</dbReference>
<dbReference type="SMR" id="Q9AYZ1"/>
<dbReference type="GeneID" id="920990"/>
<dbReference type="KEGG" id="vg:920990"/>
<dbReference type="OrthoDB" id="14605at10239"/>
<dbReference type="Proteomes" id="UP000000725">
    <property type="component" value="Genome"/>
</dbReference>
<dbReference type="GO" id="GO:0046718">
    <property type="term" value="P:symbiont entry into host cell"/>
    <property type="evidence" value="ECO:0007669"/>
    <property type="project" value="UniProtKB-KW"/>
</dbReference>
<proteinExistence type="inferred from homology"/>
<accession>Q9AYZ1</accession>
<name>VG07_BPHK6</name>
<organismHost>
    <name type="scientific">Escherichia coli</name>
    <dbReference type="NCBI Taxonomy" id="562"/>
</organismHost>
<protein>
    <recommendedName>
        <fullName>DNA transfer protein gp7</fullName>
    </recommendedName>
</protein>
<feature type="chain" id="PRO_0000077753" description="DNA transfer protein gp7">
    <location>
        <begin position="1"/>
        <end position="230"/>
    </location>
</feature>
<gene>
    <name type="primary">7</name>
</gene>
<keyword id="KW-1185">Reference proteome</keyword>
<keyword id="KW-1171">Viral genome ejection through host cell envelope</keyword>
<keyword id="KW-1162">Viral penetration into host cytoplasm</keyword>
<keyword id="KW-1160">Virus entry into host cell</keyword>
<reference key="1">
    <citation type="journal article" date="2001" name="J. Mol. Biol.">
        <title>Nucleotide sequence of coliphage HK620 and the evolution of lambdoid phages.</title>
        <authorList>
            <person name="Clark A.J."/>
            <person name="Inwood W."/>
            <person name="Cloutier T."/>
            <person name="Dhillon T.S."/>
        </authorList>
    </citation>
    <scope>NUCLEOTIDE SEQUENCE [LARGE SCALE GENOMIC DNA]</scope>
</reference>